<name>Y1584_LACDB</name>
<protein>
    <recommendedName>
        <fullName evidence="1">UPF0397 protein LBUL_1584</fullName>
    </recommendedName>
</protein>
<feature type="chain" id="PRO_1000069199" description="UPF0397 protein LBUL_1584">
    <location>
        <begin position="1"/>
        <end position="186"/>
    </location>
</feature>
<feature type="transmembrane region" description="Helical" evidence="1">
    <location>
        <begin position="13"/>
        <end position="33"/>
    </location>
</feature>
<feature type="transmembrane region" description="Helical" evidence="1">
    <location>
        <begin position="46"/>
        <end position="66"/>
    </location>
</feature>
<feature type="transmembrane region" description="Helical" evidence="1">
    <location>
        <begin position="79"/>
        <end position="99"/>
    </location>
</feature>
<feature type="transmembrane region" description="Helical" evidence="1">
    <location>
        <begin position="114"/>
        <end position="134"/>
    </location>
</feature>
<feature type="transmembrane region" description="Helical" evidence="1">
    <location>
        <begin position="150"/>
        <end position="170"/>
    </location>
</feature>
<organism>
    <name type="scientific">Lactobacillus delbrueckii subsp. bulgaricus (strain ATCC BAA-365 / Lb-18)</name>
    <dbReference type="NCBI Taxonomy" id="321956"/>
    <lineage>
        <taxon>Bacteria</taxon>
        <taxon>Bacillati</taxon>
        <taxon>Bacillota</taxon>
        <taxon>Bacilli</taxon>
        <taxon>Lactobacillales</taxon>
        <taxon>Lactobacillaceae</taxon>
        <taxon>Lactobacillus</taxon>
    </lineage>
</organism>
<dbReference type="EMBL" id="CP000412">
    <property type="protein sequence ID" value="ABJ59071.1"/>
    <property type="molecule type" value="Genomic_DNA"/>
</dbReference>
<dbReference type="RefSeq" id="WP_003623706.1">
    <property type="nucleotide sequence ID" value="NC_008529.1"/>
</dbReference>
<dbReference type="SMR" id="Q048Q1"/>
<dbReference type="KEGG" id="lbu:LBUL_1584"/>
<dbReference type="HOGENOM" id="CLU_120023_0_0_9"/>
<dbReference type="BioCyc" id="LDEL321956:LBUL_RS07475-MONOMER"/>
<dbReference type="GO" id="GO:0005886">
    <property type="term" value="C:plasma membrane"/>
    <property type="evidence" value="ECO:0007669"/>
    <property type="project" value="UniProtKB-SubCell"/>
</dbReference>
<dbReference type="Gene3D" id="1.10.1760.20">
    <property type="match status" value="1"/>
</dbReference>
<dbReference type="HAMAP" id="MF_01572">
    <property type="entry name" value="UPF0397"/>
    <property type="match status" value="1"/>
</dbReference>
<dbReference type="InterPro" id="IPR009825">
    <property type="entry name" value="ECF_substrate-spec-like"/>
</dbReference>
<dbReference type="InterPro" id="IPR022914">
    <property type="entry name" value="UPF0397"/>
</dbReference>
<dbReference type="NCBIfam" id="NF010182">
    <property type="entry name" value="PRK13661.1"/>
    <property type="match status" value="1"/>
</dbReference>
<dbReference type="PANTHER" id="PTHR37815">
    <property type="entry name" value="UPF0397 PROTEIN BC_2624-RELATED"/>
    <property type="match status" value="1"/>
</dbReference>
<dbReference type="PANTHER" id="PTHR37815:SF3">
    <property type="entry name" value="UPF0397 PROTEIN SPR0429"/>
    <property type="match status" value="1"/>
</dbReference>
<dbReference type="Pfam" id="PF07155">
    <property type="entry name" value="ECF-ribofla_trS"/>
    <property type="match status" value="1"/>
</dbReference>
<comment type="subcellular location">
    <subcellularLocation>
        <location evidence="1">Cell membrane</location>
        <topology evidence="1">Multi-pass membrane protein</topology>
    </subcellularLocation>
</comment>
<comment type="similarity">
    <text evidence="1">Belongs to the UPF0397 family.</text>
</comment>
<sequence length="186" mass="20133">MNKDMWKLSPKNIAALGIGSAVFVIVGRFASIPSGLPNTNFELVYAFLAMIAMIYGPTVGFGVGFIGHVLLDLMMYGQTWWNWNFAAGFLGFFIGLYALRVNIDQGEFSAKEMVIFNVVQVVANAIVWFLLGSVGDMVLNSEPAAKVFAQAGLTTLMDGLTIAVLGTILLKLYAGSRVKKGSLHKD</sequence>
<proteinExistence type="inferred from homology"/>
<reference key="1">
    <citation type="journal article" date="2006" name="Proc. Natl. Acad. Sci. U.S.A.">
        <title>Comparative genomics of the lactic acid bacteria.</title>
        <authorList>
            <person name="Makarova K.S."/>
            <person name="Slesarev A."/>
            <person name="Wolf Y.I."/>
            <person name="Sorokin A."/>
            <person name="Mirkin B."/>
            <person name="Koonin E.V."/>
            <person name="Pavlov A."/>
            <person name="Pavlova N."/>
            <person name="Karamychev V."/>
            <person name="Polouchine N."/>
            <person name="Shakhova V."/>
            <person name="Grigoriev I."/>
            <person name="Lou Y."/>
            <person name="Rohksar D."/>
            <person name="Lucas S."/>
            <person name="Huang K."/>
            <person name="Goodstein D.M."/>
            <person name="Hawkins T."/>
            <person name="Plengvidhya V."/>
            <person name="Welker D."/>
            <person name="Hughes J."/>
            <person name="Goh Y."/>
            <person name="Benson A."/>
            <person name="Baldwin K."/>
            <person name="Lee J.-H."/>
            <person name="Diaz-Muniz I."/>
            <person name="Dosti B."/>
            <person name="Smeianov V."/>
            <person name="Wechter W."/>
            <person name="Barabote R."/>
            <person name="Lorca G."/>
            <person name="Altermann E."/>
            <person name="Barrangou R."/>
            <person name="Ganesan B."/>
            <person name="Xie Y."/>
            <person name="Rawsthorne H."/>
            <person name="Tamir D."/>
            <person name="Parker C."/>
            <person name="Breidt F."/>
            <person name="Broadbent J.R."/>
            <person name="Hutkins R."/>
            <person name="O'Sullivan D."/>
            <person name="Steele J."/>
            <person name="Unlu G."/>
            <person name="Saier M.H. Jr."/>
            <person name="Klaenhammer T."/>
            <person name="Richardson P."/>
            <person name="Kozyavkin S."/>
            <person name="Weimer B.C."/>
            <person name="Mills D.A."/>
        </authorList>
    </citation>
    <scope>NUCLEOTIDE SEQUENCE [LARGE SCALE GENOMIC DNA]</scope>
    <source>
        <strain>ATCC BAA-365 / Lb-18</strain>
    </source>
</reference>
<accession>Q048Q1</accession>
<keyword id="KW-1003">Cell membrane</keyword>
<keyword id="KW-0472">Membrane</keyword>
<keyword id="KW-0812">Transmembrane</keyword>
<keyword id="KW-1133">Transmembrane helix</keyword>
<gene>
    <name type="ordered locus">LBUL_1584</name>
</gene>
<evidence type="ECO:0000255" key="1">
    <source>
        <dbReference type="HAMAP-Rule" id="MF_01572"/>
    </source>
</evidence>